<organism>
    <name type="scientific">Ehrlichia canis (strain Jake)</name>
    <dbReference type="NCBI Taxonomy" id="269484"/>
    <lineage>
        <taxon>Bacteria</taxon>
        <taxon>Pseudomonadati</taxon>
        <taxon>Pseudomonadota</taxon>
        <taxon>Alphaproteobacteria</taxon>
        <taxon>Rickettsiales</taxon>
        <taxon>Anaplasmataceae</taxon>
        <taxon>Ehrlichia</taxon>
    </lineage>
</organism>
<reference key="1">
    <citation type="journal article" date="2006" name="J. Bacteriol.">
        <title>The genome of the obligately intracellular bacterium Ehrlichia canis reveals themes of complex membrane structure and immune evasion strategies.</title>
        <authorList>
            <person name="Mavromatis K."/>
            <person name="Doyle C.K."/>
            <person name="Lykidis A."/>
            <person name="Ivanova N."/>
            <person name="Francino M.P."/>
            <person name="Chain P."/>
            <person name="Shin M."/>
            <person name="Malfatti S."/>
            <person name="Larimer F."/>
            <person name="Copeland A."/>
            <person name="Detter J.C."/>
            <person name="Land M."/>
            <person name="Richardson P.M."/>
            <person name="Yu X.J."/>
            <person name="Walker D.H."/>
            <person name="McBride J.W."/>
            <person name="Kyrpides N.C."/>
        </authorList>
    </citation>
    <scope>NUCLEOTIDE SEQUENCE [LARGE SCALE GENOMIC DNA]</scope>
    <source>
        <strain>Jake</strain>
    </source>
</reference>
<sequence length="299" mass="33985">MRSKPDWLKVKMPTGDTFYQMRNLMKLYKLNTVCEEAACPNVGECWNKKHATVMILGSTCTRACAFCNVATGIPDKLDPHEPQNLAKAINSLKLHHVVITSVDRDDLPDGGAGHFVECIEEIRKRDDNITIEILTPDFLNKHGAIDKIAAVAPDVYNHNVETVPRLYARIRPKARYFHSLYLLKAVKYKNPKIFTKSGIMVGLGETKEEIYQVMDDLRSADVDFITIGQYLQPTPKHAVVDRYVTPEEFDHYKYVAYSKGFLMVASGPLVRSSYHAEEDFQKLKQNRTAMLMRAESNSI</sequence>
<dbReference type="EC" id="2.8.1.8" evidence="1"/>
<dbReference type="EMBL" id="CP000107">
    <property type="protein sequence ID" value="AAZ68573.1"/>
    <property type="molecule type" value="Genomic_DNA"/>
</dbReference>
<dbReference type="RefSeq" id="WP_011304651.1">
    <property type="nucleotide sequence ID" value="NC_007354.1"/>
</dbReference>
<dbReference type="SMR" id="Q3YRT2"/>
<dbReference type="FunCoup" id="Q3YRT2">
    <property type="interactions" value="330"/>
</dbReference>
<dbReference type="STRING" id="269484.Ecaj_0537"/>
<dbReference type="KEGG" id="ecn:Ecaj_0537"/>
<dbReference type="eggNOG" id="COG0320">
    <property type="taxonomic scope" value="Bacteria"/>
</dbReference>
<dbReference type="HOGENOM" id="CLU_033144_2_1_5"/>
<dbReference type="InParanoid" id="Q3YRT2"/>
<dbReference type="UniPathway" id="UPA00538">
    <property type="reaction ID" value="UER00593"/>
</dbReference>
<dbReference type="Proteomes" id="UP000000435">
    <property type="component" value="Chromosome"/>
</dbReference>
<dbReference type="GO" id="GO:0005737">
    <property type="term" value="C:cytoplasm"/>
    <property type="evidence" value="ECO:0007669"/>
    <property type="project" value="UniProtKB-SubCell"/>
</dbReference>
<dbReference type="GO" id="GO:0051539">
    <property type="term" value="F:4 iron, 4 sulfur cluster binding"/>
    <property type="evidence" value="ECO:0007669"/>
    <property type="project" value="UniProtKB-UniRule"/>
</dbReference>
<dbReference type="GO" id="GO:0016992">
    <property type="term" value="F:lipoate synthase activity"/>
    <property type="evidence" value="ECO:0007669"/>
    <property type="project" value="UniProtKB-UniRule"/>
</dbReference>
<dbReference type="GO" id="GO:0046872">
    <property type="term" value="F:metal ion binding"/>
    <property type="evidence" value="ECO:0007669"/>
    <property type="project" value="UniProtKB-KW"/>
</dbReference>
<dbReference type="CDD" id="cd01335">
    <property type="entry name" value="Radical_SAM"/>
    <property type="match status" value="1"/>
</dbReference>
<dbReference type="FunFam" id="3.20.20.70:FF:000040">
    <property type="entry name" value="Lipoyl synthase"/>
    <property type="match status" value="1"/>
</dbReference>
<dbReference type="Gene3D" id="3.20.20.70">
    <property type="entry name" value="Aldolase class I"/>
    <property type="match status" value="1"/>
</dbReference>
<dbReference type="HAMAP" id="MF_00206">
    <property type="entry name" value="Lipoyl_synth"/>
    <property type="match status" value="1"/>
</dbReference>
<dbReference type="InterPro" id="IPR013785">
    <property type="entry name" value="Aldolase_TIM"/>
</dbReference>
<dbReference type="InterPro" id="IPR006638">
    <property type="entry name" value="Elp3/MiaA/NifB-like_rSAM"/>
</dbReference>
<dbReference type="InterPro" id="IPR031691">
    <property type="entry name" value="LIAS_N"/>
</dbReference>
<dbReference type="InterPro" id="IPR003698">
    <property type="entry name" value="Lipoyl_synth"/>
</dbReference>
<dbReference type="InterPro" id="IPR007197">
    <property type="entry name" value="rSAM"/>
</dbReference>
<dbReference type="NCBIfam" id="TIGR00510">
    <property type="entry name" value="lipA"/>
    <property type="match status" value="1"/>
</dbReference>
<dbReference type="NCBIfam" id="NF004019">
    <property type="entry name" value="PRK05481.1"/>
    <property type="match status" value="1"/>
</dbReference>
<dbReference type="NCBIfam" id="NF009544">
    <property type="entry name" value="PRK12928.1"/>
    <property type="match status" value="1"/>
</dbReference>
<dbReference type="PANTHER" id="PTHR10949">
    <property type="entry name" value="LIPOYL SYNTHASE"/>
    <property type="match status" value="1"/>
</dbReference>
<dbReference type="PANTHER" id="PTHR10949:SF0">
    <property type="entry name" value="LIPOYL SYNTHASE, MITOCHONDRIAL"/>
    <property type="match status" value="1"/>
</dbReference>
<dbReference type="Pfam" id="PF16881">
    <property type="entry name" value="LIAS_N"/>
    <property type="match status" value="1"/>
</dbReference>
<dbReference type="Pfam" id="PF04055">
    <property type="entry name" value="Radical_SAM"/>
    <property type="match status" value="1"/>
</dbReference>
<dbReference type="PIRSF" id="PIRSF005963">
    <property type="entry name" value="Lipoyl_synth"/>
    <property type="match status" value="1"/>
</dbReference>
<dbReference type="SFLD" id="SFLDF00271">
    <property type="entry name" value="lipoyl_synthase"/>
    <property type="match status" value="1"/>
</dbReference>
<dbReference type="SFLD" id="SFLDG01058">
    <property type="entry name" value="lipoyl_synthase_like"/>
    <property type="match status" value="1"/>
</dbReference>
<dbReference type="SMART" id="SM00729">
    <property type="entry name" value="Elp3"/>
    <property type="match status" value="1"/>
</dbReference>
<dbReference type="SUPFAM" id="SSF102114">
    <property type="entry name" value="Radical SAM enzymes"/>
    <property type="match status" value="1"/>
</dbReference>
<dbReference type="PROSITE" id="PS51918">
    <property type="entry name" value="RADICAL_SAM"/>
    <property type="match status" value="1"/>
</dbReference>
<comment type="function">
    <text evidence="1">Catalyzes the radical-mediated insertion of two sulfur atoms into the C-6 and C-8 positions of the octanoyl moiety bound to the lipoyl domains of lipoate-dependent enzymes, thereby converting the octanoylated domains into lipoylated derivatives.</text>
</comment>
<comment type="catalytic activity">
    <reaction evidence="1">
        <text>[[Fe-S] cluster scaffold protein carrying a second [4Fe-4S](2+) cluster] + N(6)-octanoyl-L-lysyl-[protein] + 2 oxidized [2Fe-2S]-[ferredoxin] + 2 S-adenosyl-L-methionine + 4 H(+) = [[Fe-S] cluster scaffold protein] + N(6)-[(R)-dihydrolipoyl]-L-lysyl-[protein] + 4 Fe(3+) + 2 hydrogen sulfide + 2 5'-deoxyadenosine + 2 L-methionine + 2 reduced [2Fe-2S]-[ferredoxin]</text>
        <dbReference type="Rhea" id="RHEA:16585"/>
        <dbReference type="Rhea" id="RHEA-COMP:9928"/>
        <dbReference type="Rhea" id="RHEA-COMP:10000"/>
        <dbReference type="Rhea" id="RHEA-COMP:10001"/>
        <dbReference type="Rhea" id="RHEA-COMP:10475"/>
        <dbReference type="Rhea" id="RHEA-COMP:14568"/>
        <dbReference type="Rhea" id="RHEA-COMP:14569"/>
        <dbReference type="ChEBI" id="CHEBI:15378"/>
        <dbReference type="ChEBI" id="CHEBI:17319"/>
        <dbReference type="ChEBI" id="CHEBI:29034"/>
        <dbReference type="ChEBI" id="CHEBI:29919"/>
        <dbReference type="ChEBI" id="CHEBI:33722"/>
        <dbReference type="ChEBI" id="CHEBI:33737"/>
        <dbReference type="ChEBI" id="CHEBI:33738"/>
        <dbReference type="ChEBI" id="CHEBI:57844"/>
        <dbReference type="ChEBI" id="CHEBI:59789"/>
        <dbReference type="ChEBI" id="CHEBI:78809"/>
        <dbReference type="ChEBI" id="CHEBI:83100"/>
        <dbReference type="EC" id="2.8.1.8"/>
    </reaction>
</comment>
<comment type="cofactor">
    <cofactor evidence="1">
        <name>[4Fe-4S] cluster</name>
        <dbReference type="ChEBI" id="CHEBI:49883"/>
    </cofactor>
    <text evidence="1">Binds 2 [4Fe-4S] clusters per subunit. One cluster is coordinated with 3 cysteines and an exchangeable S-adenosyl-L-methionine.</text>
</comment>
<comment type="pathway">
    <text evidence="1">Protein modification; protein lipoylation via endogenous pathway; protein N(6)-(lipoyl)lysine from octanoyl-[acyl-carrier-protein]: step 2/2.</text>
</comment>
<comment type="subcellular location">
    <subcellularLocation>
        <location evidence="1">Cytoplasm</location>
    </subcellularLocation>
</comment>
<comment type="similarity">
    <text evidence="1">Belongs to the radical SAM superfamily. Lipoyl synthase family.</text>
</comment>
<proteinExistence type="inferred from homology"/>
<accession>Q3YRT2</accession>
<protein>
    <recommendedName>
        <fullName evidence="1">Lipoyl synthase</fullName>
        <ecNumber evidence="1">2.8.1.8</ecNumber>
    </recommendedName>
    <alternativeName>
        <fullName evidence="1">Lip-syn</fullName>
        <shortName evidence="1">LS</shortName>
    </alternativeName>
    <alternativeName>
        <fullName evidence="1">Lipoate synthase</fullName>
    </alternativeName>
    <alternativeName>
        <fullName evidence="1">Lipoic acid synthase</fullName>
    </alternativeName>
    <alternativeName>
        <fullName evidence="1">Sulfur insertion protein LipA</fullName>
    </alternativeName>
</protein>
<keyword id="KW-0004">4Fe-4S</keyword>
<keyword id="KW-0963">Cytoplasm</keyword>
<keyword id="KW-0408">Iron</keyword>
<keyword id="KW-0411">Iron-sulfur</keyword>
<keyword id="KW-0479">Metal-binding</keyword>
<keyword id="KW-0949">S-adenosyl-L-methionine</keyword>
<keyword id="KW-0808">Transferase</keyword>
<feature type="chain" id="PRO_1000012216" description="Lipoyl synthase">
    <location>
        <begin position="1"/>
        <end position="299"/>
    </location>
</feature>
<feature type="domain" description="Radical SAM core" evidence="2">
    <location>
        <begin position="46"/>
        <end position="262"/>
    </location>
</feature>
<feature type="binding site" evidence="1">
    <location>
        <position position="34"/>
    </location>
    <ligand>
        <name>[4Fe-4S] cluster</name>
        <dbReference type="ChEBI" id="CHEBI:49883"/>
        <label>1</label>
    </ligand>
</feature>
<feature type="binding site" evidence="1">
    <location>
        <position position="39"/>
    </location>
    <ligand>
        <name>[4Fe-4S] cluster</name>
        <dbReference type="ChEBI" id="CHEBI:49883"/>
        <label>1</label>
    </ligand>
</feature>
<feature type="binding site" evidence="1">
    <location>
        <position position="45"/>
    </location>
    <ligand>
        <name>[4Fe-4S] cluster</name>
        <dbReference type="ChEBI" id="CHEBI:49883"/>
        <label>1</label>
    </ligand>
</feature>
<feature type="binding site" evidence="1">
    <location>
        <position position="60"/>
    </location>
    <ligand>
        <name>[4Fe-4S] cluster</name>
        <dbReference type="ChEBI" id="CHEBI:49883"/>
        <label>2</label>
        <note>4Fe-4S-S-AdoMet</note>
    </ligand>
</feature>
<feature type="binding site" evidence="1">
    <location>
        <position position="64"/>
    </location>
    <ligand>
        <name>[4Fe-4S] cluster</name>
        <dbReference type="ChEBI" id="CHEBI:49883"/>
        <label>2</label>
        <note>4Fe-4S-S-AdoMet</note>
    </ligand>
</feature>
<feature type="binding site" evidence="1">
    <location>
        <position position="67"/>
    </location>
    <ligand>
        <name>[4Fe-4S] cluster</name>
        <dbReference type="ChEBI" id="CHEBI:49883"/>
        <label>2</label>
        <note>4Fe-4S-S-AdoMet</note>
    </ligand>
</feature>
<feature type="binding site" evidence="1">
    <location>
        <position position="273"/>
    </location>
    <ligand>
        <name>[4Fe-4S] cluster</name>
        <dbReference type="ChEBI" id="CHEBI:49883"/>
        <label>1</label>
    </ligand>
</feature>
<evidence type="ECO:0000255" key="1">
    <source>
        <dbReference type="HAMAP-Rule" id="MF_00206"/>
    </source>
</evidence>
<evidence type="ECO:0000255" key="2">
    <source>
        <dbReference type="PROSITE-ProRule" id="PRU01266"/>
    </source>
</evidence>
<name>LIPA_EHRCJ</name>
<gene>
    <name evidence="1" type="primary">lipA</name>
    <name type="ordered locus">Ecaj_0537</name>
</gene>